<sequence>MASPLNNGRKASEIFQGQALLYKHLLGFIDSKCLKWMVELDIPDIIHSHSHGQPITFSELVSILQVPPTKTRQVQSLMRYLAHNGFFEIVRIHDNIEAYALTAASELLVKSSELSLAPMVEYFLEPNCQGAWNQLKRWVHEEDLTVFGVSLGTPFWDFINKDPAYNKSFNEAMACDSQMLNLAFRDCNWVFEGLESIVDVGGGTGITAKIICEAFPKLKCMVLERPNVVENLSGSNNLTFVGGDMFKCIPKADAVLLKLVLHNWNDNDCMKILENCKEAISGESKTGKVVVIDTVINENKDERQVTELKLLMDVHMACIINGKERKEEDWKKLFMEAGFQSYKISPFTGYLSLIEIYP</sequence>
<dbReference type="EC" id="2.1.1.231"/>
<dbReference type="EMBL" id="BT094674">
    <property type="protein sequence ID" value="ACU18983.1"/>
    <property type="molecule type" value="mRNA"/>
</dbReference>
<dbReference type="SMR" id="C6TAY1"/>
<dbReference type="STRING" id="3847.C6TAY1"/>
<dbReference type="PaxDb" id="3847-GLYMA08G27070.1"/>
<dbReference type="eggNOG" id="KOG3178">
    <property type="taxonomic scope" value="Eukaryota"/>
</dbReference>
<dbReference type="InParanoid" id="C6TAY1"/>
<dbReference type="BRENDA" id="2.1.1.231">
    <property type="organism ID" value="2483"/>
</dbReference>
<dbReference type="Proteomes" id="UP000008827">
    <property type="component" value="Unplaced"/>
</dbReference>
<dbReference type="GO" id="GO:0102767">
    <property type="term" value="F:flavanone 4'-O-methyltransferase activity"/>
    <property type="evidence" value="ECO:0007669"/>
    <property type="project" value="UniProtKB-EC"/>
</dbReference>
<dbReference type="GO" id="GO:0008171">
    <property type="term" value="F:O-methyltransferase activity"/>
    <property type="evidence" value="ECO:0000318"/>
    <property type="project" value="GO_Central"/>
</dbReference>
<dbReference type="GO" id="GO:0046983">
    <property type="term" value="F:protein dimerization activity"/>
    <property type="evidence" value="ECO:0007669"/>
    <property type="project" value="InterPro"/>
</dbReference>
<dbReference type="GO" id="GO:0008757">
    <property type="term" value="F:S-adenosylmethionine-dependent methyltransferase activity"/>
    <property type="evidence" value="ECO:0000318"/>
    <property type="project" value="GO_Central"/>
</dbReference>
<dbReference type="GO" id="GO:0009058">
    <property type="term" value="P:biosynthetic process"/>
    <property type="evidence" value="ECO:0000318"/>
    <property type="project" value="GO_Central"/>
</dbReference>
<dbReference type="GO" id="GO:0032259">
    <property type="term" value="P:methylation"/>
    <property type="evidence" value="ECO:0000318"/>
    <property type="project" value="GO_Central"/>
</dbReference>
<dbReference type="CDD" id="cd02440">
    <property type="entry name" value="AdoMet_MTases"/>
    <property type="match status" value="1"/>
</dbReference>
<dbReference type="FunFam" id="3.40.50.150:FF:000057">
    <property type="entry name" value="O-methyltransferase ZRP4"/>
    <property type="match status" value="1"/>
</dbReference>
<dbReference type="FunFam" id="1.10.10.10:FF:001780">
    <property type="entry name" value="Uncharacterized protein"/>
    <property type="match status" value="1"/>
</dbReference>
<dbReference type="Gene3D" id="3.40.50.150">
    <property type="entry name" value="Vaccinia Virus protein VP39"/>
    <property type="match status" value="1"/>
</dbReference>
<dbReference type="Gene3D" id="1.10.10.10">
    <property type="entry name" value="Winged helix-like DNA-binding domain superfamily/Winged helix DNA-binding domain"/>
    <property type="match status" value="1"/>
</dbReference>
<dbReference type="InterPro" id="IPR016461">
    <property type="entry name" value="COMT-like"/>
</dbReference>
<dbReference type="InterPro" id="IPR001077">
    <property type="entry name" value="O_MeTrfase_dom"/>
</dbReference>
<dbReference type="InterPro" id="IPR012967">
    <property type="entry name" value="Plant_O-MeTrfase_dimerisation"/>
</dbReference>
<dbReference type="InterPro" id="IPR029063">
    <property type="entry name" value="SAM-dependent_MTases_sf"/>
</dbReference>
<dbReference type="InterPro" id="IPR036388">
    <property type="entry name" value="WH-like_DNA-bd_sf"/>
</dbReference>
<dbReference type="InterPro" id="IPR036390">
    <property type="entry name" value="WH_DNA-bd_sf"/>
</dbReference>
<dbReference type="PANTHER" id="PTHR11746">
    <property type="entry name" value="O-METHYLTRANSFERASE"/>
    <property type="match status" value="1"/>
</dbReference>
<dbReference type="Pfam" id="PF08100">
    <property type="entry name" value="Dimerisation"/>
    <property type="match status" value="1"/>
</dbReference>
<dbReference type="Pfam" id="PF00891">
    <property type="entry name" value="Methyltransf_2"/>
    <property type="match status" value="1"/>
</dbReference>
<dbReference type="PIRSF" id="PIRSF005739">
    <property type="entry name" value="O-mtase"/>
    <property type="match status" value="1"/>
</dbReference>
<dbReference type="SUPFAM" id="SSF53335">
    <property type="entry name" value="S-adenosyl-L-methionine-dependent methyltransferases"/>
    <property type="match status" value="1"/>
</dbReference>
<dbReference type="SUPFAM" id="SSF46785">
    <property type="entry name" value="Winged helix' DNA-binding domain"/>
    <property type="match status" value="1"/>
</dbReference>
<dbReference type="PROSITE" id="PS51683">
    <property type="entry name" value="SAM_OMT_II"/>
    <property type="match status" value="1"/>
</dbReference>
<proteinExistence type="evidence at protein level"/>
<keyword id="KW-0489">Methyltransferase</keyword>
<keyword id="KW-1185">Reference proteome</keyword>
<keyword id="KW-0949">S-adenosyl-L-methionine</keyword>
<keyword id="KW-0808">Transferase</keyword>
<feature type="chain" id="PRO_0000418737" description="Flavonoid 4'-O-methyltransferase">
    <location>
        <begin position="1"/>
        <end position="358"/>
    </location>
</feature>
<feature type="region of interest" description="Substrate binding" evidence="1">
    <location>
        <begin position="155"/>
        <end position="173"/>
    </location>
</feature>
<feature type="active site" description="Proton acceptor" evidence="2">
    <location>
        <position position="262"/>
    </location>
</feature>
<feature type="binding site" evidence="1">
    <location>
        <begin position="122"/>
        <end position="128"/>
    </location>
    <ligand>
        <name>substrate</name>
    </ligand>
</feature>
<feature type="binding site" evidence="2">
    <location>
        <position position="201"/>
    </location>
    <ligand>
        <name>S-adenosyl-L-methionine</name>
        <dbReference type="ChEBI" id="CHEBI:59789"/>
    </ligand>
</feature>
<feature type="binding site" evidence="2">
    <location>
        <position position="224"/>
    </location>
    <ligand>
        <name>S-adenosyl-L-methionine</name>
        <dbReference type="ChEBI" id="CHEBI:59789"/>
    </ligand>
</feature>
<feature type="binding site" evidence="2">
    <location>
        <position position="245"/>
    </location>
    <ligand>
        <name>S-adenosyl-L-methionine</name>
        <dbReference type="ChEBI" id="CHEBI:59789"/>
    </ligand>
</feature>
<feature type="binding site" evidence="2">
    <location>
        <position position="258"/>
    </location>
    <ligand>
        <name>S-adenosyl-L-methionine</name>
        <dbReference type="ChEBI" id="CHEBI:59789"/>
    </ligand>
</feature>
<name>SOMT2_SOYBN</name>
<comment type="function">
    <text evidence="3">S-adenosyl-L-methionine-dependent methyltransferase that catalyzes the 4'-methylation of naringenin (4',5,7-trihydroxyflavanone) into ponciretin (4'-methoxy-5,7-dihydroxyflavanone). In vitro, also able to convert apigenin, daidzein, genistein and quercetin into the 4'-O-methylated compounds acacetin, formononetin, biochanine A and 4'-methylated quercetin, respectively.</text>
</comment>
<comment type="catalytic activity">
    <reaction evidence="3">
        <text>a 4'-hydroxyflavanone + S-adenosyl-L-methionine = a 4'-methoxyflavanone + S-adenosyl-L-homocysteine + H(+)</text>
        <dbReference type="Rhea" id="RHEA:31743"/>
        <dbReference type="ChEBI" id="CHEBI:15378"/>
        <dbReference type="ChEBI" id="CHEBI:57856"/>
        <dbReference type="ChEBI" id="CHEBI:59789"/>
        <dbReference type="ChEBI" id="CHEBI:140331"/>
        <dbReference type="ChEBI" id="CHEBI:140332"/>
        <dbReference type="EC" id="2.1.1.231"/>
    </reaction>
</comment>
<comment type="similarity">
    <text evidence="2">Belongs to the class I-like SAM-binding methyltransferase superfamily. Cation-independent O-methyltransferase family. COMT subfamily.</text>
</comment>
<accession>C6TAY1</accession>
<reference key="1">
    <citation type="submission" date="2009-08" db="EMBL/GenBank/DDBJ databases">
        <authorList>
            <person name="Cheung F."/>
            <person name="Xiao Y."/>
            <person name="Chan A."/>
            <person name="Moskal W."/>
            <person name="Town C.D."/>
        </authorList>
    </citation>
    <scope>NUCLEOTIDE SEQUENCE [LARGE SCALE MRNA]</scope>
</reference>
<reference key="2">
    <citation type="journal article" date="2005" name="J. Biotechnol.">
        <title>Regiospecific methylation of naringenin to ponciretin by soybean O-methyltransferase expressed in Escherichia coli.</title>
        <authorList>
            <person name="Kim D.H."/>
            <person name="Kim B.G."/>
            <person name="Lee Y."/>
            <person name="Ryu J.Y."/>
            <person name="Lim Y."/>
            <person name="Hur H.G."/>
            <person name="Ahn J.H."/>
        </authorList>
    </citation>
    <scope>FUNCTION</scope>
    <scope>CATALYTIC ACTIVITY</scope>
    <source>
        <strain>cv. Paldal</strain>
    </source>
</reference>
<organism>
    <name type="scientific">Glycine max</name>
    <name type="common">Soybean</name>
    <name type="synonym">Glycine hispida</name>
    <dbReference type="NCBI Taxonomy" id="3847"/>
    <lineage>
        <taxon>Eukaryota</taxon>
        <taxon>Viridiplantae</taxon>
        <taxon>Streptophyta</taxon>
        <taxon>Embryophyta</taxon>
        <taxon>Tracheophyta</taxon>
        <taxon>Spermatophyta</taxon>
        <taxon>Magnoliopsida</taxon>
        <taxon>eudicotyledons</taxon>
        <taxon>Gunneridae</taxon>
        <taxon>Pentapetalae</taxon>
        <taxon>rosids</taxon>
        <taxon>fabids</taxon>
        <taxon>Fabales</taxon>
        <taxon>Fabaceae</taxon>
        <taxon>Papilionoideae</taxon>
        <taxon>50 kb inversion clade</taxon>
        <taxon>NPAAA clade</taxon>
        <taxon>indigoferoid/millettioid clade</taxon>
        <taxon>Phaseoleae</taxon>
        <taxon>Glycine</taxon>
        <taxon>Glycine subgen. Soja</taxon>
    </lineage>
</organism>
<protein>
    <recommendedName>
        <fullName>Flavonoid 4'-O-methyltransferase</fullName>
        <ecNumber>2.1.1.231</ecNumber>
    </recommendedName>
    <alternativeName>
        <fullName>S-adenosyl-L-methionine-dependent methyltransferase 2</fullName>
        <shortName>SOMT-2</shortName>
    </alternativeName>
</protein>
<evidence type="ECO:0000250" key="1"/>
<evidence type="ECO:0000255" key="2">
    <source>
        <dbReference type="PROSITE-ProRule" id="PRU01020"/>
    </source>
</evidence>
<evidence type="ECO:0000269" key="3">
    <source>
    </source>
</evidence>